<feature type="chain" id="PRO_0000146600" description="Small ribosomal subunit protein uS10">
    <location>
        <begin position="1"/>
        <end position="102"/>
    </location>
</feature>
<protein>
    <recommendedName>
        <fullName evidence="1">Small ribosomal subunit protein uS10</fullName>
    </recommendedName>
    <alternativeName>
        <fullName evidence="2">30S ribosomal protein S10</fullName>
    </alternativeName>
</protein>
<evidence type="ECO:0000255" key="1">
    <source>
        <dbReference type="HAMAP-Rule" id="MF_00508"/>
    </source>
</evidence>
<evidence type="ECO:0000305" key="2"/>
<comment type="function">
    <text evidence="1">Involved in the binding of tRNA to the ribosomes.</text>
</comment>
<comment type="subunit">
    <text evidence="1">Part of the 30S ribosomal subunit.</text>
</comment>
<comment type="similarity">
    <text evidence="1">Belongs to the universal ribosomal protein uS10 family.</text>
</comment>
<dbReference type="EMBL" id="AE015929">
    <property type="protein sequence ID" value="AAO05466.1"/>
    <property type="molecule type" value="Genomic_DNA"/>
</dbReference>
<dbReference type="RefSeq" id="NP_765380.1">
    <property type="nucleotide sequence ID" value="NC_004461.1"/>
</dbReference>
<dbReference type="RefSeq" id="WP_001118667.1">
    <property type="nucleotide sequence ID" value="NZ_WBME01000007.1"/>
</dbReference>
<dbReference type="SMR" id="P66336"/>
<dbReference type="GeneID" id="98346563"/>
<dbReference type="KEGG" id="sep:SE_1825"/>
<dbReference type="PATRIC" id="fig|176280.10.peg.1781"/>
<dbReference type="eggNOG" id="COG0051">
    <property type="taxonomic scope" value="Bacteria"/>
</dbReference>
<dbReference type="HOGENOM" id="CLU_122625_1_3_9"/>
<dbReference type="OrthoDB" id="9804464at2"/>
<dbReference type="PRO" id="PR:P66336"/>
<dbReference type="Proteomes" id="UP000001411">
    <property type="component" value="Chromosome"/>
</dbReference>
<dbReference type="GO" id="GO:1990904">
    <property type="term" value="C:ribonucleoprotein complex"/>
    <property type="evidence" value="ECO:0007669"/>
    <property type="project" value="UniProtKB-KW"/>
</dbReference>
<dbReference type="GO" id="GO:0005840">
    <property type="term" value="C:ribosome"/>
    <property type="evidence" value="ECO:0007669"/>
    <property type="project" value="UniProtKB-KW"/>
</dbReference>
<dbReference type="GO" id="GO:0003735">
    <property type="term" value="F:structural constituent of ribosome"/>
    <property type="evidence" value="ECO:0007669"/>
    <property type="project" value="InterPro"/>
</dbReference>
<dbReference type="GO" id="GO:0000049">
    <property type="term" value="F:tRNA binding"/>
    <property type="evidence" value="ECO:0007669"/>
    <property type="project" value="UniProtKB-UniRule"/>
</dbReference>
<dbReference type="GO" id="GO:0006412">
    <property type="term" value="P:translation"/>
    <property type="evidence" value="ECO:0007669"/>
    <property type="project" value="UniProtKB-UniRule"/>
</dbReference>
<dbReference type="FunFam" id="3.30.70.600:FF:000001">
    <property type="entry name" value="30S ribosomal protein S10"/>
    <property type="match status" value="1"/>
</dbReference>
<dbReference type="Gene3D" id="3.30.70.600">
    <property type="entry name" value="Ribosomal protein S10 domain"/>
    <property type="match status" value="1"/>
</dbReference>
<dbReference type="HAMAP" id="MF_00508">
    <property type="entry name" value="Ribosomal_uS10"/>
    <property type="match status" value="1"/>
</dbReference>
<dbReference type="InterPro" id="IPR001848">
    <property type="entry name" value="Ribosomal_uS10"/>
</dbReference>
<dbReference type="InterPro" id="IPR018268">
    <property type="entry name" value="Ribosomal_uS10_CS"/>
</dbReference>
<dbReference type="InterPro" id="IPR027486">
    <property type="entry name" value="Ribosomal_uS10_dom"/>
</dbReference>
<dbReference type="InterPro" id="IPR036838">
    <property type="entry name" value="Ribosomal_uS10_dom_sf"/>
</dbReference>
<dbReference type="NCBIfam" id="NF001861">
    <property type="entry name" value="PRK00596.1"/>
    <property type="match status" value="1"/>
</dbReference>
<dbReference type="NCBIfam" id="TIGR01049">
    <property type="entry name" value="rpsJ_bact"/>
    <property type="match status" value="1"/>
</dbReference>
<dbReference type="PANTHER" id="PTHR11700">
    <property type="entry name" value="30S RIBOSOMAL PROTEIN S10 FAMILY MEMBER"/>
    <property type="match status" value="1"/>
</dbReference>
<dbReference type="Pfam" id="PF00338">
    <property type="entry name" value="Ribosomal_S10"/>
    <property type="match status" value="1"/>
</dbReference>
<dbReference type="PRINTS" id="PR00971">
    <property type="entry name" value="RIBOSOMALS10"/>
</dbReference>
<dbReference type="SMART" id="SM01403">
    <property type="entry name" value="Ribosomal_S10"/>
    <property type="match status" value="1"/>
</dbReference>
<dbReference type="SUPFAM" id="SSF54999">
    <property type="entry name" value="Ribosomal protein S10"/>
    <property type="match status" value="1"/>
</dbReference>
<dbReference type="PROSITE" id="PS00361">
    <property type="entry name" value="RIBOSOMAL_S10"/>
    <property type="match status" value="1"/>
</dbReference>
<accession>P66336</accession>
<accession>Q99S20</accession>
<sequence length="102" mass="11576">MAKQKIRIRLKAYDHRVIDQSAEKIVETAKRSGADVSGPIPLPTEKSVYTIIRAVHKYKDSREQFEQRTHKRLIDIVNPTPKTVDALMGLNLPSGVDIEIKL</sequence>
<gene>
    <name evidence="1" type="primary">rpsJ</name>
    <name type="ordered locus">SE_1825</name>
</gene>
<proteinExistence type="inferred from homology"/>
<organism>
    <name type="scientific">Staphylococcus epidermidis (strain ATCC 12228 / FDA PCI 1200)</name>
    <dbReference type="NCBI Taxonomy" id="176280"/>
    <lineage>
        <taxon>Bacteria</taxon>
        <taxon>Bacillati</taxon>
        <taxon>Bacillota</taxon>
        <taxon>Bacilli</taxon>
        <taxon>Bacillales</taxon>
        <taxon>Staphylococcaceae</taxon>
        <taxon>Staphylococcus</taxon>
    </lineage>
</organism>
<keyword id="KW-0687">Ribonucleoprotein</keyword>
<keyword id="KW-0689">Ribosomal protein</keyword>
<name>RS10_STAES</name>
<reference key="1">
    <citation type="journal article" date="2003" name="Mol. Microbiol.">
        <title>Genome-based analysis of virulence genes in a non-biofilm-forming Staphylococcus epidermidis strain (ATCC 12228).</title>
        <authorList>
            <person name="Zhang Y.-Q."/>
            <person name="Ren S.-X."/>
            <person name="Li H.-L."/>
            <person name="Wang Y.-X."/>
            <person name="Fu G."/>
            <person name="Yang J."/>
            <person name="Qin Z.-Q."/>
            <person name="Miao Y.-G."/>
            <person name="Wang W.-Y."/>
            <person name="Chen R.-S."/>
            <person name="Shen Y."/>
            <person name="Chen Z."/>
            <person name="Yuan Z.-H."/>
            <person name="Zhao G.-P."/>
            <person name="Qu D."/>
            <person name="Danchin A."/>
            <person name="Wen Y.-M."/>
        </authorList>
    </citation>
    <scope>NUCLEOTIDE SEQUENCE [LARGE SCALE GENOMIC DNA]</scope>
    <source>
        <strain>ATCC 12228 / FDA PCI 1200</strain>
    </source>
</reference>